<feature type="signal peptide" evidence="3">
    <location>
        <begin position="1"/>
        <end position="29"/>
    </location>
</feature>
<feature type="propeptide" id="PRO_0000004732" evidence="3">
    <location>
        <begin position="30"/>
        <end position="130"/>
    </location>
</feature>
<feature type="peptide" id="PRO_0000004733" description="Antibacterial peptide PMAP-23">
    <location>
        <begin position="131"/>
        <end position="153"/>
    </location>
</feature>
<feature type="region of interest" description="Disordered" evidence="4">
    <location>
        <begin position="61"/>
        <end position="80"/>
    </location>
</feature>
<feature type="modified residue" description="Pyrrolidone carboxylic acid" evidence="2">
    <location>
        <position position="30"/>
    </location>
</feature>
<feature type="disulfide bond" evidence="1">
    <location>
        <begin position="85"/>
        <end position="96"/>
    </location>
</feature>
<feature type="disulfide bond" evidence="1">
    <location>
        <begin position="107"/>
        <end position="124"/>
    </location>
</feature>
<reference key="1">
    <citation type="journal article" date="1994" name="J. Biol. Chem.">
        <title>Molecular cloning and chemical synthesis of a novel antibacterial peptide derived from pig myeloid cells.</title>
        <authorList>
            <person name="Zanetti M."/>
            <person name="Storici P."/>
            <person name="Tossi A."/>
            <person name="Scocchi M."/>
            <person name="Gennaro R."/>
        </authorList>
    </citation>
    <scope>NUCLEOTIDE SEQUENCE [MRNA]</scope>
    <scope>SYNTHESIS OF 131-153</scope>
    <source>
        <tissue>Bone marrow</tissue>
    </source>
</reference>
<reference key="2">
    <citation type="submission" date="1998-02" db="EMBL/GenBank/DDBJ databases">
        <authorList>
            <person name="Zhao C."/>
            <person name="Lehrer R.I."/>
        </authorList>
    </citation>
    <scope>NUCLEOTIDE SEQUENCE [GENOMIC DNA]</scope>
    <source>
        <tissue>Liver</tissue>
    </source>
</reference>
<keyword id="KW-0044">Antibiotic</keyword>
<keyword id="KW-0929">Antimicrobial</keyword>
<keyword id="KW-1015">Disulfide bond</keyword>
<keyword id="KW-0873">Pyrrolidone carboxylic acid</keyword>
<keyword id="KW-1185">Reference proteome</keyword>
<keyword id="KW-0964">Secreted</keyword>
<keyword id="KW-0732">Signal</keyword>
<dbReference type="EMBL" id="L26053">
    <property type="protein sequence ID" value="AAA31103.1"/>
    <property type="molecule type" value="mRNA"/>
</dbReference>
<dbReference type="EMBL" id="Y16624">
    <property type="protein sequence ID" value="CAA76328.1"/>
    <property type="molecule type" value="Genomic_DNA"/>
</dbReference>
<dbReference type="PIR" id="A53421">
    <property type="entry name" value="A53421"/>
</dbReference>
<dbReference type="RefSeq" id="NP_001123448.1">
    <property type="nucleotide sequence ID" value="NM_001129976.1"/>
</dbReference>
<dbReference type="SMR" id="P49930"/>
<dbReference type="FunCoup" id="P49930">
    <property type="interactions" value="103"/>
</dbReference>
<dbReference type="PaxDb" id="9823-ENSSSCP00000025756"/>
<dbReference type="PeptideAtlas" id="P49930"/>
<dbReference type="GeneID" id="100170138"/>
<dbReference type="KEGG" id="ssc:100170138"/>
<dbReference type="CTD" id="100170138"/>
<dbReference type="eggNOG" id="ENOG502SAES">
    <property type="taxonomic scope" value="Eukaryota"/>
</dbReference>
<dbReference type="InParanoid" id="P49930"/>
<dbReference type="OrthoDB" id="9930485at2759"/>
<dbReference type="Proteomes" id="UP000008227">
    <property type="component" value="Unplaced"/>
</dbReference>
<dbReference type="Proteomes" id="UP000314985">
    <property type="component" value="Unplaced"/>
</dbReference>
<dbReference type="Proteomes" id="UP000694570">
    <property type="component" value="Unplaced"/>
</dbReference>
<dbReference type="Proteomes" id="UP000694571">
    <property type="component" value="Unplaced"/>
</dbReference>
<dbReference type="Proteomes" id="UP000694720">
    <property type="component" value="Unplaced"/>
</dbReference>
<dbReference type="Proteomes" id="UP000694722">
    <property type="component" value="Unplaced"/>
</dbReference>
<dbReference type="Proteomes" id="UP000694723">
    <property type="component" value="Unplaced"/>
</dbReference>
<dbReference type="Proteomes" id="UP000694724">
    <property type="component" value="Unplaced"/>
</dbReference>
<dbReference type="Proteomes" id="UP000694725">
    <property type="component" value="Unplaced"/>
</dbReference>
<dbReference type="Proteomes" id="UP000694726">
    <property type="component" value="Unplaced"/>
</dbReference>
<dbReference type="Proteomes" id="UP000694727">
    <property type="component" value="Unplaced"/>
</dbReference>
<dbReference type="Proteomes" id="UP000694728">
    <property type="component" value="Unplaced"/>
</dbReference>
<dbReference type="GO" id="GO:0005615">
    <property type="term" value="C:extracellular space"/>
    <property type="evidence" value="ECO:0000318"/>
    <property type="project" value="GO_Central"/>
</dbReference>
<dbReference type="GO" id="GO:0001530">
    <property type="term" value="F:lipopolysaccharide binding"/>
    <property type="evidence" value="ECO:0000318"/>
    <property type="project" value="GO_Central"/>
</dbReference>
<dbReference type="GO" id="GO:0061844">
    <property type="term" value="P:antimicrobial humoral immune response mediated by antimicrobial peptide"/>
    <property type="evidence" value="ECO:0000318"/>
    <property type="project" value="GO_Central"/>
</dbReference>
<dbReference type="GO" id="GO:0050829">
    <property type="term" value="P:defense response to Gram-negative bacterium"/>
    <property type="evidence" value="ECO:0000318"/>
    <property type="project" value="GO_Central"/>
</dbReference>
<dbReference type="GO" id="GO:0050830">
    <property type="term" value="P:defense response to Gram-positive bacterium"/>
    <property type="evidence" value="ECO:0000318"/>
    <property type="project" value="GO_Central"/>
</dbReference>
<dbReference type="GO" id="GO:0045087">
    <property type="term" value="P:innate immune response"/>
    <property type="evidence" value="ECO:0000318"/>
    <property type="project" value="GO_Central"/>
</dbReference>
<dbReference type="FunFam" id="3.10.450.10:FF:000003">
    <property type="entry name" value="Cathelicidin antimicrobial peptide"/>
    <property type="match status" value="1"/>
</dbReference>
<dbReference type="Gene3D" id="3.10.450.10">
    <property type="match status" value="1"/>
</dbReference>
<dbReference type="InterPro" id="IPR001894">
    <property type="entry name" value="Cathelicidin-like"/>
</dbReference>
<dbReference type="InterPro" id="IPR018216">
    <property type="entry name" value="Cathelicidin_CS"/>
</dbReference>
<dbReference type="InterPro" id="IPR046350">
    <property type="entry name" value="Cystatin_sf"/>
</dbReference>
<dbReference type="PANTHER" id="PTHR10206">
    <property type="entry name" value="CATHELICIDIN"/>
    <property type="match status" value="1"/>
</dbReference>
<dbReference type="PANTHER" id="PTHR10206:SF2">
    <property type="entry name" value="CATHELICIDIN ANTIMICROBIAL PEPTIDE"/>
    <property type="match status" value="1"/>
</dbReference>
<dbReference type="Pfam" id="PF00666">
    <property type="entry name" value="Cathelicidins"/>
    <property type="match status" value="1"/>
</dbReference>
<dbReference type="SUPFAM" id="SSF54403">
    <property type="entry name" value="Cystatin/monellin"/>
    <property type="match status" value="1"/>
</dbReference>
<dbReference type="PROSITE" id="PS00946">
    <property type="entry name" value="CATHELICIDINS_1"/>
    <property type="match status" value="1"/>
</dbReference>
<dbReference type="PROSITE" id="PS00947">
    <property type="entry name" value="CATHELICIDINS_2"/>
    <property type="match status" value="1"/>
</dbReference>
<proteinExistence type="evidence at transcript level"/>
<gene>
    <name type="primary">PMAP23</name>
</gene>
<protein>
    <recommendedName>
        <fullName>Antibacterial peptide PMAP-23</fullName>
    </recommendedName>
    <alternativeName>
        <fullName>Myeloid antibacterial peptide 23</fullName>
    </alternativeName>
</protein>
<organism>
    <name type="scientific">Sus scrofa</name>
    <name type="common">Pig</name>
    <dbReference type="NCBI Taxonomy" id="9823"/>
    <lineage>
        <taxon>Eukaryota</taxon>
        <taxon>Metazoa</taxon>
        <taxon>Chordata</taxon>
        <taxon>Craniata</taxon>
        <taxon>Vertebrata</taxon>
        <taxon>Euteleostomi</taxon>
        <taxon>Mammalia</taxon>
        <taxon>Eutheria</taxon>
        <taxon>Laurasiatheria</taxon>
        <taxon>Artiodactyla</taxon>
        <taxon>Suina</taxon>
        <taxon>Suidae</taxon>
        <taxon>Sus</taxon>
    </lineage>
</organism>
<sequence>METQRASLCLGRWSLWLLLLGLVVPSASAQALSYREAVLRAVDRLNEQSSEANLYRLLELDQPPKADEDPGTPKPVSFTVKETVCPRPTRQPPELCDFKENGRVKQCVGTVTLKEIRGNFDITCNQLQSVRIIDLLWRVRRPQKPKFVTVWVR</sequence>
<comment type="function">
    <text>Exerts antimicrobial activity against both Gram-positive and negative bacteria at concentrations of 2-16 micro molar. Its activity appears to be mediated by its ability to damage bacterial membranes.</text>
</comment>
<comment type="subcellular location">
    <subcellularLocation>
        <location>Secreted</location>
    </subcellularLocation>
</comment>
<comment type="similarity">
    <text evidence="5">Belongs to the cathelicidin family.</text>
</comment>
<evidence type="ECO:0000250" key="1"/>
<evidence type="ECO:0000250" key="2">
    <source>
        <dbReference type="UniProtKB" id="P19660"/>
    </source>
</evidence>
<evidence type="ECO:0000255" key="3"/>
<evidence type="ECO:0000256" key="4">
    <source>
        <dbReference type="SAM" id="MobiDB-lite"/>
    </source>
</evidence>
<evidence type="ECO:0000305" key="5"/>
<accession>P49930</accession>
<name>PMP23_PIG</name>